<accession>Q09EG3</accession>
<dbReference type="EC" id="7.1.1.2"/>
<dbReference type="EMBL" id="DQ989636">
    <property type="protein sequence ID" value="ABI64276.1"/>
    <property type="molecule type" value="Genomic_DNA"/>
</dbReference>
<dbReference type="EMBL" id="EF035448">
    <property type="protein sequence ID" value="ABK54083.1"/>
    <property type="molecule type" value="Genomic_DNA"/>
</dbReference>
<dbReference type="RefSeq" id="YP_778677.1">
    <property type="nucleotide sequence ID" value="NC_008414.3"/>
</dbReference>
<dbReference type="SMR" id="Q09EG3"/>
<dbReference type="GeneID" id="4356576"/>
<dbReference type="CTD" id="4539"/>
<dbReference type="GO" id="GO:0005743">
    <property type="term" value="C:mitochondrial inner membrane"/>
    <property type="evidence" value="ECO:0000250"/>
    <property type="project" value="UniProtKB"/>
</dbReference>
<dbReference type="GO" id="GO:0045271">
    <property type="term" value="C:respiratory chain complex I"/>
    <property type="evidence" value="ECO:0000250"/>
    <property type="project" value="UniProtKB"/>
</dbReference>
<dbReference type="GO" id="GO:0008137">
    <property type="term" value="F:NADH dehydrogenase (ubiquinone) activity"/>
    <property type="evidence" value="ECO:0000250"/>
    <property type="project" value="UniProtKB"/>
</dbReference>
<dbReference type="GO" id="GO:0042773">
    <property type="term" value="P:ATP synthesis coupled electron transport"/>
    <property type="evidence" value="ECO:0007669"/>
    <property type="project" value="InterPro"/>
</dbReference>
<dbReference type="FunFam" id="1.10.287.3510:FF:000002">
    <property type="entry name" value="NADH-ubiquinone oxidoreductase chain 4L"/>
    <property type="match status" value="1"/>
</dbReference>
<dbReference type="Gene3D" id="1.10.287.3510">
    <property type="match status" value="1"/>
</dbReference>
<dbReference type="InterPro" id="IPR001133">
    <property type="entry name" value="NADH_UbQ_OxRdtase_chain4L/K"/>
</dbReference>
<dbReference type="InterPro" id="IPR039428">
    <property type="entry name" value="NUOK/Mnh_C1-like"/>
</dbReference>
<dbReference type="PANTHER" id="PTHR11434:SF0">
    <property type="entry name" value="NADH-UBIQUINONE OXIDOREDUCTASE CHAIN 4L"/>
    <property type="match status" value="1"/>
</dbReference>
<dbReference type="PANTHER" id="PTHR11434">
    <property type="entry name" value="NADH-UBIQUINONE OXIDOREDUCTASE SUBUNIT ND4L"/>
    <property type="match status" value="1"/>
</dbReference>
<dbReference type="Pfam" id="PF00420">
    <property type="entry name" value="Oxidored_q2"/>
    <property type="match status" value="1"/>
</dbReference>
<organism>
    <name type="scientific">Rusa unicolor swinhoei</name>
    <name type="common">Formosan sambar</name>
    <name type="synonym">Cervus unicolor swinhoei</name>
    <dbReference type="NCBI Taxonomy" id="399782"/>
    <lineage>
        <taxon>Eukaryota</taxon>
        <taxon>Metazoa</taxon>
        <taxon>Chordata</taxon>
        <taxon>Craniata</taxon>
        <taxon>Vertebrata</taxon>
        <taxon>Euteleostomi</taxon>
        <taxon>Mammalia</taxon>
        <taxon>Eutheria</taxon>
        <taxon>Laurasiatheria</taxon>
        <taxon>Artiodactyla</taxon>
        <taxon>Ruminantia</taxon>
        <taxon>Pecora</taxon>
        <taxon>Cervidae</taxon>
        <taxon>Cervinae</taxon>
        <taxon>Rusa</taxon>
    </lineage>
</organism>
<reference key="1">
    <citation type="submission" date="2006-09" db="EMBL/GenBank/DDBJ databases">
        <authorList>
            <person name="Chen C.H."/>
            <person name="Chiang L.C."/>
            <person name="Huang M.C."/>
        </authorList>
    </citation>
    <scope>NUCLEOTIDE SEQUENCE [GENOMIC DNA]</scope>
</reference>
<reference key="2">
    <citation type="submission" date="2006-10" db="EMBL/GenBank/DDBJ databases">
        <title>The complete sequence of mitochondrial genome of Formosan sambar (Cervus unicolor swinhoei).</title>
        <authorList>
            <person name="Chang H.-W."/>
            <person name="Wang H.-W."/>
            <person name="Tsai C.-L."/>
            <person name="Lin C.-Y."/>
            <person name="Chou Y.C."/>
        </authorList>
    </citation>
    <scope>NUCLEOTIDE SEQUENCE [GENOMIC DNA]</scope>
</reference>
<sequence length="98" mass="10748">MSLVYMNIMTAFMVALAGLLMYRSHLMSSLLCLEGMMLSLFVMASLTILNSHFTLASMMPIILLVFAACEAALGLSLLVKVSNTYGTDYVQNLNLLQC</sequence>
<comment type="function">
    <text evidence="1">Core subunit of the mitochondrial membrane respiratory chain NADH dehydrogenase (Complex I) which catalyzes electron transfer from NADH through the respiratory chain, using ubiquinone as an electron acceptor. Part of the enzyme membrane arm which is embedded in the lipid bilayer and involved in proton translocation.</text>
</comment>
<comment type="catalytic activity">
    <reaction evidence="1">
        <text>a ubiquinone + NADH + 5 H(+)(in) = a ubiquinol + NAD(+) + 4 H(+)(out)</text>
        <dbReference type="Rhea" id="RHEA:29091"/>
        <dbReference type="Rhea" id="RHEA-COMP:9565"/>
        <dbReference type="Rhea" id="RHEA-COMP:9566"/>
        <dbReference type="ChEBI" id="CHEBI:15378"/>
        <dbReference type="ChEBI" id="CHEBI:16389"/>
        <dbReference type="ChEBI" id="CHEBI:17976"/>
        <dbReference type="ChEBI" id="CHEBI:57540"/>
        <dbReference type="ChEBI" id="CHEBI:57945"/>
        <dbReference type="EC" id="7.1.1.2"/>
    </reaction>
    <physiologicalReaction direction="left-to-right" evidence="1">
        <dbReference type="Rhea" id="RHEA:29092"/>
    </physiologicalReaction>
</comment>
<comment type="subunit">
    <text evidence="2">Core subunit of respiratory chain NADH dehydrogenase (Complex I) which is composed of 45 different subunits.</text>
</comment>
<comment type="subcellular location">
    <subcellularLocation>
        <location evidence="2">Mitochondrion inner membrane</location>
        <topology evidence="3">Multi-pass membrane protein</topology>
    </subcellularLocation>
</comment>
<comment type="similarity">
    <text evidence="4">Belongs to the complex I subunit 4L family.</text>
</comment>
<feature type="chain" id="PRO_0000274992" description="NADH-ubiquinone oxidoreductase chain 4L">
    <location>
        <begin position="1"/>
        <end position="98"/>
    </location>
</feature>
<feature type="transmembrane region" description="Helical" evidence="3">
    <location>
        <begin position="1"/>
        <end position="21"/>
    </location>
</feature>
<feature type="transmembrane region" description="Helical" evidence="3">
    <location>
        <begin position="29"/>
        <end position="49"/>
    </location>
</feature>
<feature type="transmembrane region" description="Helical" evidence="3">
    <location>
        <begin position="59"/>
        <end position="79"/>
    </location>
</feature>
<evidence type="ECO:0000250" key="1">
    <source>
        <dbReference type="UniProtKB" id="P03901"/>
    </source>
</evidence>
<evidence type="ECO:0000250" key="2">
    <source>
        <dbReference type="UniProtKB" id="P03902"/>
    </source>
</evidence>
<evidence type="ECO:0000255" key="3"/>
<evidence type="ECO:0000305" key="4"/>
<protein>
    <recommendedName>
        <fullName>NADH-ubiquinone oxidoreductase chain 4L</fullName>
        <ecNumber>7.1.1.2</ecNumber>
    </recommendedName>
    <alternativeName>
        <fullName>NADH dehydrogenase subunit 4L</fullName>
    </alternativeName>
</protein>
<name>NU4LM_RUSUS</name>
<gene>
    <name type="primary">MT-ND4L</name>
    <name type="synonym">MTND4L</name>
    <name type="synonym">NADH4L</name>
    <name type="synonym">ND4L</name>
</gene>
<proteinExistence type="inferred from homology"/>
<keyword id="KW-0249">Electron transport</keyword>
<keyword id="KW-0472">Membrane</keyword>
<keyword id="KW-0496">Mitochondrion</keyword>
<keyword id="KW-0999">Mitochondrion inner membrane</keyword>
<keyword id="KW-0520">NAD</keyword>
<keyword id="KW-0679">Respiratory chain</keyword>
<keyword id="KW-1278">Translocase</keyword>
<keyword id="KW-0812">Transmembrane</keyword>
<keyword id="KW-1133">Transmembrane helix</keyword>
<keyword id="KW-0813">Transport</keyword>
<keyword id="KW-0830">Ubiquinone</keyword>
<geneLocation type="mitochondrion"/>